<name>CLPP3_SYNP6</name>
<proteinExistence type="inferred from homology"/>
<evidence type="ECO:0000255" key="1">
    <source>
        <dbReference type="HAMAP-Rule" id="MF_00444"/>
    </source>
</evidence>
<sequence>MFSSHASLPIHSRRLAAGLDSRWQQPQIQAIAGSQAIVPTVVEQSGRGERAFDIYSRLLRERIVFLGTGVDDAVADSIVAQLLFLEAEDPEKDIQLYINSPGGSVTAGMAIYDTMQQVAPDVATICFGLAASMGAFLLSGGAQGKRMALPSARIMIHQPLGGAQGQAVDIEIQAREILYHKSTLNDLLAQHTGQPLEKIEVDTDRDFFMSPEEAKAYGLIDQVLTRPTMAITDHNDAVLQ</sequence>
<gene>
    <name evidence="1" type="primary">clpP3</name>
    <name type="ordered locus">syc1584_c</name>
</gene>
<organism>
    <name type="scientific">Synechococcus sp. (strain ATCC 27144 / PCC 6301 / SAUG 1402/1)</name>
    <name type="common">Anacystis nidulans</name>
    <dbReference type="NCBI Taxonomy" id="269084"/>
    <lineage>
        <taxon>Bacteria</taxon>
        <taxon>Bacillati</taxon>
        <taxon>Cyanobacteriota</taxon>
        <taxon>Cyanophyceae</taxon>
        <taxon>Synechococcales</taxon>
        <taxon>Synechococcaceae</taxon>
        <taxon>Synechococcus</taxon>
    </lineage>
</organism>
<dbReference type="EC" id="3.4.21.92" evidence="1"/>
<dbReference type="EMBL" id="AP008231">
    <property type="protein sequence ID" value="BAD79774.1"/>
    <property type="molecule type" value="Genomic_DNA"/>
</dbReference>
<dbReference type="SMR" id="Q5N1P6"/>
<dbReference type="MEROPS" id="S14.001"/>
<dbReference type="KEGG" id="syc:syc1584_c"/>
<dbReference type="eggNOG" id="COG0740">
    <property type="taxonomic scope" value="Bacteria"/>
</dbReference>
<dbReference type="Proteomes" id="UP000001175">
    <property type="component" value="Chromosome"/>
</dbReference>
<dbReference type="GO" id="GO:0005737">
    <property type="term" value="C:cytoplasm"/>
    <property type="evidence" value="ECO:0007669"/>
    <property type="project" value="UniProtKB-SubCell"/>
</dbReference>
<dbReference type="GO" id="GO:0009368">
    <property type="term" value="C:endopeptidase Clp complex"/>
    <property type="evidence" value="ECO:0007669"/>
    <property type="project" value="TreeGrafter"/>
</dbReference>
<dbReference type="GO" id="GO:0004176">
    <property type="term" value="F:ATP-dependent peptidase activity"/>
    <property type="evidence" value="ECO:0007669"/>
    <property type="project" value="InterPro"/>
</dbReference>
<dbReference type="GO" id="GO:0051117">
    <property type="term" value="F:ATPase binding"/>
    <property type="evidence" value="ECO:0007669"/>
    <property type="project" value="TreeGrafter"/>
</dbReference>
<dbReference type="GO" id="GO:0004252">
    <property type="term" value="F:serine-type endopeptidase activity"/>
    <property type="evidence" value="ECO:0007669"/>
    <property type="project" value="UniProtKB-UniRule"/>
</dbReference>
<dbReference type="GO" id="GO:0006515">
    <property type="term" value="P:protein quality control for misfolded or incompletely synthesized proteins"/>
    <property type="evidence" value="ECO:0007669"/>
    <property type="project" value="TreeGrafter"/>
</dbReference>
<dbReference type="CDD" id="cd07017">
    <property type="entry name" value="S14_ClpP_2"/>
    <property type="match status" value="1"/>
</dbReference>
<dbReference type="FunFam" id="3.90.226.10:FF:000001">
    <property type="entry name" value="ATP-dependent Clp protease proteolytic subunit"/>
    <property type="match status" value="1"/>
</dbReference>
<dbReference type="Gene3D" id="3.90.226.10">
    <property type="entry name" value="2-enoyl-CoA Hydratase, Chain A, domain 1"/>
    <property type="match status" value="1"/>
</dbReference>
<dbReference type="HAMAP" id="MF_00444">
    <property type="entry name" value="ClpP"/>
    <property type="match status" value="1"/>
</dbReference>
<dbReference type="InterPro" id="IPR001907">
    <property type="entry name" value="ClpP"/>
</dbReference>
<dbReference type="InterPro" id="IPR029045">
    <property type="entry name" value="ClpP/crotonase-like_dom_sf"/>
</dbReference>
<dbReference type="InterPro" id="IPR023562">
    <property type="entry name" value="ClpP/TepA"/>
</dbReference>
<dbReference type="InterPro" id="IPR033135">
    <property type="entry name" value="ClpP_His_AS"/>
</dbReference>
<dbReference type="InterPro" id="IPR018215">
    <property type="entry name" value="ClpP_Ser_AS"/>
</dbReference>
<dbReference type="NCBIfam" id="TIGR00493">
    <property type="entry name" value="clpP"/>
    <property type="match status" value="1"/>
</dbReference>
<dbReference type="NCBIfam" id="NF001368">
    <property type="entry name" value="PRK00277.1"/>
    <property type="match status" value="1"/>
</dbReference>
<dbReference type="NCBIfam" id="NF009205">
    <property type="entry name" value="PRK12553.1"/>
    <property type="match status" value="1"/>
</dbReference>
<dbReference type="PANTHER" id="PTHR10381">
    <property type="entry name" value="ATP-DEPENDENT CLP PROTEASE PROTEOLYTIC SUBUNIT"/>
    <property type="match status" value="1"/>
</dbReference>
<dbReference type="PANTHER" id="PTHR10381:SF70">
    <property type="entry name" value="ATP-DEPENDENT CLP PROTEASE PROTEOLYTIC SUBUNIT"/>
    <property type="match status" value="1"/>
</dbReference>
<dbReference type="Pfam" id="PF00574">
    <property type="entry name" value="CLP_protease"/>
    <property type="match status" value="1"/>
</dbReference>
<dbReference type="PRINTS" id="PR00127">
    <property type="entry name" value="CLPPROTEASEP"/>
</dbReference>
<dbReference type="SUPFAM" id="SSF52096">
    <property type="entry name" value="ClpP/crotonase"/>
    <property type="match status" value="1"/>
</dbReference>
<dbReference type="PROSITE" id="PS00382">
    <property type="entry name" value="CLP_PROTEASE_HIS"/>
    <property type="match status" value="1"/>
</dbReference>
<dbReference type="PROSITE" id="PS00381">
    <property type="entry name" value="CLP_PROTEASE_SER"/>
    <property type="match status" value="1"/>
</dbReference>
<keyword id="KW-0963">Cytoplasm</keyword>
<keyword id="KW-0378">Hydrolase</keyword>
<keyword id="KW-0645">Protease</keyword>
<keyword id="KW-0720">Serine protease</keyword>
<comment type="function">
    <text evidence="1">Cleaves peptides in various proteins in a process that requires ATP hydrolysis. Has a chymotrypsin-like activity. Plays a major role in the degradation of misfolded proteins.</text>
</comment>
<comment type="catalytic activity">
    <reaction evidence="1">
        <text>Hydrolysis of proteins to small peptides in the presence of ATP and magnesium. alpha-casein is the usual test substrate. In the absence of ATP, only oligopeptides shorter than five residues are hydrolyzed (such as succinyl-Leu-Tyr-|-NHMec, and Leu-Tyr-Leu-|-Tyr-Trp, in which cleavage of the -Tyr-|-Leu- and -Tyr-|-Trp bonds also occurs).</text>
        <dbReference type="EC" id="3.4.21.92"/>
    </reaction>
</comment>
<comment type="subunit">
    <text evidence="1">Fourteen ClpP subunits assemble into 2 heptameric rings which stack back to back to give a disk-like structure with a central cavity, resembling the structure of eukaryotic proteasomes.</text>
</comment>
<comment type="subcellular location">
    <subcellularLocation>
        <location evidence="1">Cytoplasm</location>
    </subcellularLocation>
</comment>
<comment type="similarity">
    <text evidence="1">Belongs to the peptidase S14 family.</text>
</comment>
<accession>Q5N1P6</accession>
<feature type="chain" id="PRO_0000179685" description="ATP-dependent Clp protease proteolytic subunit 3">
    <location>
        <begin position="1"/>
        <end position="240"/>
    </location>
</feature>
<feature type="active site" description="Nucleophile" evidence="1">
    <location>
        <position position="132"/>
    </location>
</feature>
<feature type="active site" evidence="1">
    <location>
        <position position="157"/>
    </location>
</feature>
<protein>
    <recommendedName>
        <fullName evidence="1">ATP-dependent Clp protease proteolytic subunit 3</fullName>
        <ecNumber evidence="1">3.4.21.92</ecNumber>
    </recommendedName>
    <alternativeName>
        <fullName evidence="1">Endopeptidase Clp 3</fullName>
    </alternativeName>
</protein>
<reference key="1">
    <citation type="journal article" date="2007" name="Photosyn. Res.">
        <title>Complete nucleotide sequence of the freshwater unicellular cyanobacterium Synechococcus elongatus PCC 6301 chromosome: gene content and organization.</title>
        <authorList>
            <person name="Sugita C."/>
            <person name="Ogata K."/>
            <person name="Shikata M."/>
            <person name="Jikuya H."/>
            <person name="Takano J."/>
            <person name="Furumichi M."/>
            <person name="Kanehisa M."/>
            <person name="Omata T."/>
            <person name="Sugiura M."/>
            <person name="Sugita M."/>
        </authorList>
    </citation>
    <scope>NUCLEOTIDE SEQUENCE [LARGE SCALE GENOMIC DNA]</scope>
    <source>
        <strain>ATCC 27144 / PCC 6301 / SAUG 1402/1</strain>
    </source>
</reference>